<name>RL6_LISIN</name>
<accession>Q927M2</accession>
<gene>
    <name evidence="1" type="primary">rplF</name>
    <name type="ordered locus">lin2766</name>
</gene>
<proteinExistence type="inferred from homology"/>
<sequence>MSRIGKKTIVIPAGVTVTLNGSTATVKGPKGELVKEFNPEITINIEGNEINVSRPTDNKNHRALHGTTRAILNNMVVGVSEGYEKKLELIGVGYRAQKQGDKLVLNVGYSHPVEFVAPKGVEIEVPANTQVIVKGYNKEHVGELAANIRAVRPPEPYKGKGIRYEGEHVRRKEGKTGK</sequence>
<evidence type="ECO:0000255" key="1">
    <source>
        <dbReference type="HAMAP-Rule" id="MF_01365"/>
    </source>
</evidence>
<evidence type="ECO:0000305" key="2"/>
<keyword id="KW-0687">Ribonucleoprotein</keyword>
<keyword id="KW-0689">Ribosomal protein</keyword>
<keyword id="KW-0694">RNA-binding</keyword>
<keyword id="KW-0699">rRNA-binding</keyword>
<reference key="1">
    <citation type="journal article" date="2001" name="Science">
        <title>Comparative genomics of Listeria species.</title>
        <authorList>
            <person name="Glaser P."/>
            <person name="Frangeul L."/>
            <person name="Buchrieser C."/>
            <person name="Rusniok C."/>
            <person name="Amend A."/>
            <person name="Baquero F."/>
            <person name="Berche P."/>
            <person name="Bloecker H."/>
            <person name="Brandt P."/>
            <person name="Chakraborty T."/>
            <person name="Charbit A."/>
            <person name="Chetouani F."/>
            <person name="Couve E."/>
            <person name="de Daruvar A."/>
            <person name="Dehoux P."/>
            <person name="Domann E."/>
            <person name="Dominguez-Bernal G."/>
            <person name="Duchaud E."/>
            <person name="Durant L."/>
            <person name="Dussurget O."/>
            <person name="Entian K.-D."/>
            <person name="Fsihi H."/>
            <person name="Garcia-del Portillo F."/>
            <person name="Garrido P."/>
            <person name="Gautier L."/>
            <person name="Goebel W."/>
            <person name="Gomez-Lopez N."/>
            <person name="Hain T."/>
            <person name="Hauf J."/>
            <person name="Jackson D."/>
            <person name="Jones L.-M."/>
            <person name="Kaerst U."/>
            <person name="Kreft J."/>
            <person name="Kuhn M."/>
            <person name="Kunst F."/>
            <person name="Kurapkat G."/>
            <person name="Madueno E."/>
            <person name="Maitournam A."/>
            <person name="Mata Vicente J."/>
            <person name="Ng E."/>
            <person name="Nedjari H."/>
            <person name="Nordsiek G."/>
            <person name="Novella S."/>
            <person name="de Pablos B."/>
            <person name="Perez-Diaz J.-C."/>
            <person name="Purcell R."/>
            <person name="Remmel B."/>
            <person name="Rose M."/>
            <person name="Schlueter T."/>
            <person name="Simoes N."/>
            <person name="Tierrez A."/>
            <person name="Vazquez-Boland J.-A."/>
            <person name="Voss H."/>
            <person name="Wehland J."/>
            <person name="Cossart P."/>
        </authorList>
    </citation>
    <scope>NUCLEOTIDE SEQUENCE [LARGE SCALE GENOMIC DNA]</scope>
    <source>
        <strain>ATCC BAA-680 / CLIP 11262</strain>
    </source>
</reference>
<protein>
    <recommendedName>
        <fullName evidence="1">Large ribosomal subunit protein uL6</fullName>
    </recommendedName>
    <alternativeName>
        <fullName evidence="2">50S ribosomal protein L6</fullName>
    </alternativeName>
</protein>
<feature type="chain" id="PRO_0000260887" description="Large ribosomal subunit protein uL6">
    <location>
        <begin position="1"/>
        <end position="178"/>
    </location>
</feature>
<comment type="function">
    <text evidence="1">This protein binds to the 23S rRNA, and is important in its secondary structure. It is located near the subunit interface in the base of the L7/L12 stalk, and near the tRNA binding site of the peptidyltransferase center.</text>
</comment>
<comment type="subunit">
    <text evidence="1">Part of the 50S ribosomal subunit.</text>
</comment>
<comment type="similarity">
    <text evidence="1">Belongs to the universal ribosomal protein uL6 family.</text>
</comment>
<dbReference type="EMBL" id="AL596173">
    <property type="protein sequence ID" value="CAC97992.1"/>
    <property type="molecule type" value="Genomic_DNA"/>
</dbReference>
<dbReference type="PIR" id="AH1777">
    <property type="entry name" value="AH1777"/>
</dbReference>
<dbReference type="RefSeq" id="WP_003749693.1">
    <property type="nucleotide sequence ID" value="NC_003212.1"/>
</dbReference>
<dbReference type="SMR" id="Q927M2"/>
<dbReference type="STRING" id="272626.gene:17567153"/>
<dbReference type="GeneID" id="93236039"/>
<dbReference type="KEGG" id="lin:rplF"/>
<dbReference type="eggNOG" id="COG0097">
    <property type="taxonomic scope" value="Bacteria"/>
</dbReference>
<dbReference type="HOGENOM" id="CLU_065464_1_2_9"/>
<dbReference type="OrthoDB" id="9805007at2"/>
<dbReference type="Proteomes" id="UP000002513">
    <property type="component" value="Chromosome"/>
</dbReference>
<dbReference type="GO" id="GO:0022625">
    <property type="term" value="C:cytosolic large ribosomal subunit"/>
    <property type="evidence" value="ECO:0007669"/>
    <property type="project" value="TreeGrafter"/>
</dbReference>
<dbReference type="GO" id="GO:0019843">
    <property type="term" value="F:rRNA binding"/>
    <property type="evidence" value="ECO:0007669"/>
    <property type="project" value="UniProtKB-UniRule"/>
</dbReference>
<dbReference type="GO" id="GO:0003735">
    <property type="term" value="F:structural constituent of ribosome"/>
    <property type="evidence" value="ECO:0007669"/>
    <property type="project" value="InterPro"/>
</dbReference>
<dbReference type="GO" id="GO:0002181">
    <property type="term" value="P:cytoplasmic translation"/>
    <property type="evidence" value="ECO:0007669"/>
    <property type="project" value="TreeGrafter"/>
</dbReference>
<dbReference type="FunFam" id="3.90.930.12:FF:000001">
    <property type="entry name" value="50S ribosomal protein L6"/>
    <property type="match status" value="1"/>
</dbReference>
<dbReference type="FunFam" id="3.90.930.12:FF:000002">
    <property type="entry name" value="50S ribosomal protein L6"/>
    <property type="match status" value="1"/>
</dbReference>
<dbReference type="Gene3D" id="3.90.930.12">
    <property type="entry name" value="Ribosomal protein L6, alpha-beta domain"/>
    <property type="match status" value="2"/>
</dbReference>
<dbReference type="HAMAP" id="MF_01365_B">
    <property type="entry name" value="Ribosomal_uL6_B"/>
    <property type="match status" value="1"/>
</dbReference>
<dbReference type="InterPro" id="IPR000702">
    <property type="entry name" value="Ribosomal_uL6-like"/>
</dbReference>
<dbReference type="InterPro" id="IPR036789">
    <property type="entry name" value="Ribosomal_uL6-like_a/b-dom_sf"/>
</dbReference>
<dbReference type="InterPro" id="IPR020040">
    <property type="entry name" value="Ribosomal_uL6_a/b-dom"/>
</dbReference>
<dbReference type="InterPro" id="IPR019906">
    <property type="entry name" value="Ribosomal_uL6_bac-type"/>
</dbReference>
<dbReference type="InterPro" id="IPR002358">
    <property type="entry name" value="Ribosomal_uL6_CS"/>
</dbReference>
<dbReference type="NCBIfam" id="TIGR03654">
    <property type="entry name" value="L6_bact"/>
    <property type="match status" value="1"/>
</dbReference>
<dbReference type="PANTHER" id="PTHR11655">
    <property type="entry name" value="60S/50S RIBOSOMAL PROTEIN L6/L9"/>
    <property type="match status" value="1"/>
</dbReference>
<dbReference type="PANTHER" id="PTHR11655:SF14">
    <property type="entry name" value="LARGE RIBOSOMAL SUBUNIT PROTEIN UL6M"/>
    <property type="match status" value="1"/>
</dbReference>
<dbReference type="Pfam" id="PF00347">
    <property type="entry name" value="Ribosomal_L6"/>
    <property type="match status" value="2"/>
</dbReference>
<dbReference type="PIRSF" id="PIRSF002162">
    <property type="entry name" value="Ribosomal_L6"/>
    <property type="match status" value="1"/>
</dbReference>
<dbReference type="PRINTS" id="PR00059">
    <property type="entry name" value="RIBOSOMALL6"/>
</dbReference>
<dbReference type="SUPFAM" id="SSF56053">
    <property type="entry name" value="Ribosomal protein L6"/>
    <property type="match status" value="2"/>
</dbReference>
<dbReference type="PROSITE" id="PS00525">
    <property type="entry name" value="RIBOSOMAL_L6_1"/>
    <property type="match status" value="1"/>
</dbReference>
<organism>
    <name type="scientific">Listeria innocua serovar 6a (strain ATCC BAA-680 / CLIP 11262)</name>
    <dbReference type="NCBI Taxonomy" id="272626"/>
    <lineage>
        <taxon>Bacteria</taxon>
        <taxon>Bacillati</taxon>
        <taxon>Bacillota</taxon>
        <taxon>Bacilli</taxon>
        <taxon>Bacillales</taxon>
        <taxon>Listeriaceae</taxon>
        <taxon>Listeria</taxon>
    </lineage>
</organism>